<accession>P56131</accession>
<dbReference type="EC" id="2.8.4.3" evidence="1"/>
<dbReference type="EMBL" id="AE000511">
    <property type="protein sequence ID" value="AAD07337.1"/>
    <property type="molecule type" value="Genomic_DNA"/>
</dbReference>
<dbReference type="PIR" id="E64553">
    <property type="entry name" value="E64553"/>
</dbReference>
<dbReference type="RefSeq" id="NP_207067.1">
    <property type="nucleotide sequence ID" value="NC_000915.1"/>
</dbReference>
<dbReference type="RefSeq" id="WP_000870176.1">
    <property type="nucleotide sequence ID" value="NC_018939.1"/>
</dbReference>
<dbReference type="SMR" id="P56131"/>
<dbReference type="DIP" id="DIP-3713N"/>
<dbReference type="FunCoup" id="P56131">
    <property type="interactions" value="367"/>
</dbReference>
<dbReference type="IntAct" id="P56131">
    <property type="interactions" value="1"/>
</dbReference>
<dbReference type="MINT" id="P56131"/>
<dbReference type="STRING" id="85962.HP_0269"/>
<dbReference type="PaxDb" id="85962-C694_01360"/>
<dbReference type="EnsemblBacteria" id="AAD07337">
    <property type="protein sequence ID" value="AAD07337"/>
    <property type="gene ID" value="HP_0269"/>
</dbReference>
<dbReference type="KEGG" id="heo:C694_01360"/>
<dbReference type="KEGG" id="hpy:HP_0269"/>
<dbReference type="PATRIC" id="fig|85962.47.peg.289"/>
<dbReference type="eggNOG" id="COG0621">
    <property type="taxonomic scope" value="Bacteria"/>
</dbReference>
<dbReference type="InParanoid" id="P56131"/>
<dbReference type="OrthoDB" id="9805215at2"/>
<dbReference type="PhylomeDB" id="P56131"/>
<dbReference type="Proteomes" id="UP000000429">
    <property type="component" value="Chromosome"/>
</dbReference>
<dbReference type="GO" id="GO:0005829">
    <property type="term" value="C:cytosol"/>
    <property type="evidence" value="ECO:0000318"/>
    <property type="project" value="GO_Central"/>
</dbReference>
<dbReference type="GO" id="GO:0051539">
    <property type="term" value="F:4 iron, 4 sulfur cluster binding"/>
    <property type="evidence" value="ECO:0000318"/>
    <property type="project" value="GO_Central"/>
</dbReference>
<dbReference type="GO" id="GO:0046872">
    <property type="term" value="F:metal ion binding"/>
    <property type="evidence" value="ECO:0007669"/>
    <property type="project" value="UniProtKB-KW"/>
</dbReference>
<dbReference type="GO" id="GO:0035597">
    <property type="term" value="F:N6-isopentenyladenosine methylthiotransferase activity"/>
    <property type="evidence" value="ECO:0000318"/>
    <property type="project" value="GO_Central"/>
</dbReference>
<dbReference type="GO" id="GO:0035600">
    <property type="term" value="P:tRNA methylthiolation"/>
    <property type="evidence" value="ECO:0000318"/>
    <property type="project" value="GO_Central"/>
</dbReference>
<dbReference type="CDD" id="cd01335">
    <property type="entry name" value="Radical_SAM"/>
    <property type="match status" value="1"/>
</dbReference>
<dbReference type="FunFam" id="3.40.50.12160:FF:000003">
    <property type="entry name" value="CDK5 regulatory subunit-associated protein 1"/>
    <property type="match status" value="1"/>
</dbReference>
<dbReference type="FunFam" id="3.80.30.20:FF:000013">
    <property type="entry name" value="tRNA-2-methylthio-N(6)-dimethylallyladenosine synthase"/>
    <property type="match status" value="1"/>
</dbReference>
<dbReference type="Gene3D" id="3.40.50.12160">
    <property type="entry name" value="Methylthiotransferase, N-terminal domain"/>
    <property type="match status" value="1"/>
</dbReference>
<dbReference type="Gene3D" id="3.80.30.20">
    <property type="entry name" value="tm_1862 like domain"/>
    <property type="match status" value="1"/>
</dbReference>
<dbReference type="HAMAP" id="MF_01864">
    <property type="entry name" value="tRNA_metthiotr_MiaB"/>
    <property type="match status" value="1"/>
</dbReference>
<dbReference type="InterPro" id="IPR006638">
    <property type="entry name" value="Elp3/MiaA/NifB-like_rSAM"/>
</dbReference>
<dbReference type="InterPro" id="IPR005839">
    <property type="entry name" value="Methylthiotransferase"/>
</dbReference>
<dbReference type="InterPro" id="IPR020612">
    <property type="entry name" value="Methylthiotransferase_CS"/>
</dbReference>
<dbReference type="InterPro" id="IPR013848">
    <property type="entry name" value="Methylthiotransferase_N"/>
</dbReference>
<dbReference type="InterPro" id="IPR038135">
    <property type="entry name" value="Methylthiotransferase_N_sf"/>
</dbReference>
<dbReference type="InterPro" id="IPR006463">
    <property type="entry name" value="MiaB_methiolase"/>
</dbReference>
<dbReference type="InterPro" id="IPR007197">
    <property type="entry name" value="rSAM"/>
</dbReference>
<dbReference type="InterPro" id="IPR023404">
    <property type="entry name" value="rSAM_horseshoe"/>
</dbReference>
<dbReference type="InterPro" id="IPR002792">
    <property type="entry name" value="TRAM_dom"/>
</dbReference>
<dbReference type="NCBIfam" id="TIGR01574">
    <property type="entry name" value="miaB-methiolase"/>
    <property type="match status" value="1"/>
</dbReference>
<dbReference type="NCBIfam" id="TIGR00089">
    <property type="entry name" value="MiaB/RimO family radical SAM methylthiotransferase"/>
    <property type="match status" value="1"/>
</dbReference>
<dbReference type="PANTHER" id="PTHR43020">
    <property type="entry name" value="CDK5 REGULATORY SUBUNIT-ASSOCIATED PROTEIN 1"/>
    <property type="match status" value="1"/>
</dbReference>
<dbReference type="PANTHER" id="PTHR43020:SF2">
    <property type="entry name" value="MITOCHONDRIAL TRNA METHYLTHIOTRANSFERASE CDK5RAP1"/>
    <property type="match status" value="1"/>
</dbReference>
<dbReference type="Pfam" id="PF04055">
    <property type="entry name" value="Radical_SAM"/>
    <property type="match status" value="1"/>
</dbReference>
<dbReference type="Pfam" id="PF00919">
    <property type="entry name" value="UPF0004"/>
    <property type="match status" value="1"/>
</dbReference>
<dbReference type="SFLD" id="SFLDF00273">
    <property type="entry name" value="(dimethylallyl)adenosine_tRNA"/>
    <property type="match status" value="1"/>
</dbReference>
<dbReference type="SFLD" id="SFLDG01082">
    <property type="entry name" value="B12-binding_domain_containing"/>
    <property type="match status" value="1"/>
</dbReference>
<dbReference type="SFLD" id="SFLDG01061">
    <property type="entry name" value="methylthiotransferase"/>
    <property type="match status" value="1"/>
</dbReference>
<dbReference type="SMART" id="SM00729">
    <property type="entry name" value="Elp3"/>
    <property type="match status" value="1"/>
</dbReference>
<dbReference type="SUPFAM" id="SSF102114">
    <property type="entry name" value="Radical SAM enzymes"/>
    <property type="match status" value="1"/>
</dbReference>
<dbReference type="PROSITE" id="PS51449">
    <property type="entry name" value="MTTASE_N"/>
    <property type="match status" value="1"/>
</dbReference>
<dbReference type="PROSITE" id="PS01278">
    <property type="entry name" value="MTTASE_RADICAL"/>
    <property type="match status" value="1"/>
</dbReference>
<dbReference type="PROSITE" id="PS51918">
    <property type="entry name" value="RADICAL_SAM"/>
    <property type="match status" value="1"/>
</dbReference>
<dbReference type="PROSITE" id="PS50926">
    <property type="entry name" value="TRAM"/>
    <property type="match status" value="1"/>
</dbReference>
<proteinExistence type="inferred from homology"/>
<protein>
    <recommendedName>
        <fullName evidence="1">tRNA-2-methylthio-N(6)-dimethylallyladenosine synthase</fullName>
        <ecNumber evidence="1">2.8.4.3</ecNumber>
    </recommendedName>
    <alternativeName>
        <fullName evidence="1">(Dimethylallyl)adenosine tRNA methylthiotransferase MiaB</fullName>
    </alternativeName>
    <alternativeName>
        <fullName evidence="1">tRNA-i(6)A37 methylthiotransferase</fullName>
    </alternativeName>
</protein>
<comment type="function">
    <text evidence="1">Catalyzes the methylthiolation of N6-(dimethylallyl)adenosine (i(6)A), leading to the formation of 2-methylthio-N6-(dimethylallyl)adenosine (ms(2)i(6)A) at position 37 in tRNAs that read codons beginning with uridine.</text>
</comment>
<comment type="catalytic activity">
    <reaction evidence="1">
        <text>N(6)-dimethylallyladenosine(37) in tRNA + (sulfur carrier)-SH + AH2 + 2 S-adenosyl-L-methionine = 2-methylsulfanyl-N(6)-dimethylallyladenosine(37) in tRNA + (sulfur carrier)-H + 5'-deoxyadenosine + L-methionine + A + S-adenosyl-L-homocysteine + 2 H(+)</text>
        <dbReference type="Rhea" id="RHEA:37067"/>
        <dbReference type="Rhea" id="RHEA-COMP:10375"/>
        <dbReference type="Rhea" id="RHEA-COMP:10376"/>
        <dbReference type="Rhea" id="RHEA-COMP:14737"/>
        <dbReference type="Rhea" id="RHEA-COMP:14739"/>
        <dbReference type="ChEBI" id="CHEBI:13193"/>
        <dbReference type="ChEBI" id="CHEBI:15378"/>
        <dbReference type="ChEBI" id="CHEBI:17319"/>
        <dbReference type="ChEBI" id="CHEBI:17499"/>
        <dbReference type="ChEBI" id="CHEBI:29917"/>
        <dbReference type="ChEBI" id="CHEBI:57844"/>
        <dbReference type="ChEBI" id="CHEBI:57856"/>
        <dbReference type="ChEBI" id="CHEBI:59789"/>
        <dbReference type="ChEBI" id="CHEBI:64428"/>
        <dbReference type="ChEBI" id="CHEBI:74415"/>
        <dbReference type="ChEBI" id="CHEBI:74417"/>
        <dbReference type="EC" id="2.8.4.3"/>
    </reaction>
</comment>
<comment type="cofactor">
    <cofactor evidence="1">
        <name>[4Fe-4S] cluster</name>
        <dbReference type="ChEBI" id="CHEBI:49883"/>
    </cofactor>
    <text evidence="1">Binds 2 [4Fe-4S] clusters. One cluster is coordinated with 3 cysteines and an exchangeable S-adenosyl-L-methionine.</text>
</comment>
<comment type="subunit">
    <text evidence="1">Monomer.</text>
</comment>
<comment type="subcellular location">
    <subcellularLocation>
        <location evidence="1">Cytoplasm</location>
    </subcellularLocation>
</comment>
<comment type="similarity">
    <text evidence="1">Belongs to the methylthiotransferase family. MiaB subfamily.</text>
</comment>
<name>MIAB_HELPY</name>
<evidence type="ECO:0000255" key="1">
    <source>
        <dbReference type="HAMAP-Rule" id="MF_01864"/>
    </source>
</evidence>
<evidence type="ECO:0000255" key="2">
    <source>
        <dbReference type="PROSITE-ProRule" id="PRU01266"/>
    </source>
</evidence>
<gene>
    <name evidence="1" type="primary">miaB</name>
    <name type="ordered locus">HP_0269</name>
</gene>
<keyword id="KW-0004">4Fe-4S</keyword>
<keyword id="KW-0963">Cytoplasm</keyword>
<keyword id="KW-0408">Iron</keyword>
<keyword id="KW-0411">Iron-sulfur</keyword>
<keyword id="KW-0479">Metal-binding</keyword>
<keyword id="KW-1185">Reference proteome</keyword>
<keyword id="KW-0949">S-adenosyl-L-methionine</keyword>
<keyword id="KW-0808">Transferase</keyword>
<keyword id="KW-0819">tRNA processing</keyword>
<feature type="chain" id="PRO_0000141740" description="tRNA-2-methylthio-N(6)-dimethylallyladenosine synthase">
    <location>
        <begin position="1"/>
        <end position="437"/>
    </location>
</feature>
<feature type="domain" description="MTTase N-terminal" evidence="1">
    <location>
        <begin position="1"/>
        <end position="115"/>
    </location>
</feature>
<feature type="domain" description="Radical SAM core" evidence="2">
    <location>
        <begin position="134"/>
        <end position="367"/>
    </location>
</feature>
<feature type="domain" description="TRAM" evidence="1">
    <location>
        <begin position="370"/>
        <end position="436"/>
    </location>
</feature>
<feature type="binding site" evidence="1">
    <location>
        <position position="10"/>
    </location>
    <ligand>
        <name>[4Fe-4S] cluster</name>
        <dbReference type="ChEBI" id="CHEBI:49883"/>
        <label>1</label>
    </ligand>
</feature>
<feature type="binding site" evidence="1">
    <location>
        <position position="46"/>
    </location>
    <ligand>
        <name>[4Fe-4S] cluster</name>
        <dbReference type="ChEBI" id="CHEBI:49883"/>
        <label>1</label>
    </ligand>
</feature>
<feature type="binding site" evidence="1">
    <location>
        <position position="78"/>
    </location>
    <ligand>
        <name>[4Fe-4S] cluster</name>
        <dbReference type="ChEBI" id="CHEBI:49883"/>
        <label>1</label>
    </ligand>
</feature>
<feature type="binding site" evidence="1">
    <location>
        <position position="148"/>
    </location>
    <ligand>
        <name>[4Fe-4S] cluster</name>
        <dbReference type="ChEBI" id="CHEBI:49883"/>
        <label>2</label>
        <note>4Fe-4S-S-AdoMet</note>
    </ligand>
</feature>
<feature type="binding site" evidence="1">
    <location>
        <position position="152"/>
    </location>
    <ligand>
        <name>[4Fe-4S] cluster</name>
        <dbReference type="ChEBI" id="CHEBI:49883"/>
        <label>2</label>
        <note>4Fe-4S-S-AdoMet</note>
    </ligand>
</feature>
<feature type="binding site" evidence="1">
    <location>
        <position position="155"/>
    </location>
    <ligand>
        <name>[4Fe-4S] cluster</name>
        <dbReference type="ChEBI" id="CHEBI:49883"/>
        <label>2</label>
        <note>4Fe-4S-S-AdoMet</note>
    </ligand>
</feature>
<organism>
    <name type="scientific">Helicobacter pylori (strain ATCC 700392 / 26695)</name>
    <name type="common">Campylobacter pylori</name>
    <dbReference type="NCBI Taxonomy" id="85962"/>
    <lineage>
        <taxon>Bacteria</taxon>
        <taxon>Pseudomonadati</taxon>
        <taxon>Campylobacterota</taxon>
        <taxon>Epsilonproteobacteria</taxon>
        <taxon>Campylobacterales</taxon>
        <taxon>Helicobacteraceae</taxon>
        <taxon>Helicobacter</taxon>
    </lineage>
</organism>
<reference key="1">
    <citation type="journal article" date="1997" name="Nature">
        <title>The complete genome sequence of the gastric pathogen Helicobacter pylori.</title>
        <authorList>
            <person name="Tomb J.-F."/>
            <person name="White O."/>
            <person name="Kerlavage A.R."/>
            <person name="Clayton R.A."/>
            <person name="Sutton G.G."/>
            <person name="Fleischmann R.D."/>
            <person name="Ketchum K.A."/>
            <person name="Klenk H.-P."/>
            <person name="Gill S.R."/>
            <person name="Dougherty B.A."/>
            <person name="Nelson K.E."/>
            <person name="Quackenbush J."/>
            <person name="Zhou L."/>
            <person name="Kirkness E.F."/>
            <person name="Peterson S.N."/>
            <person name="Loftus B.J."/>
            <person name="Richardson D.L."/>
            <person name="Dodson R.J."/>
            <person name="Khalak H.G."/>
            <person name="Glodek A."/>
            <person name="McKenney K."/>
            <person name="FitzGerald L.M."/>
            <person name="Lee N."/>
            <person name="Adams M.D."/>
            <person name="Hickey E.K."/>
            <person name="Berg D.E."/>
            <person name="Gocayne J.D."/>
            <person name="Utterback T.R."/>
            <person name="Peterson J.D."/>
            <person name="Kelley J.M."/>
            <person name="Cotton M.D."/>
            <person name="Weidman J.F."/>
            <person name="Fujii C."/>
            <person name="Bowman C."/>
            <person name="Watthey L."/>
            <person name="Wallin E."/>
            <person name="Hayes W.S."/>
            <person name="Borodovsky M."/>
            <person name="Karp P.D."/>
            <person name="Smith H.O."/>
            <person name="Fraser C.M."/>
            <person name="Venter J.C."/>
        </authorList>
    </citation>
    <scope>NUCLEOTIDE SEQUENCE [LARGE SCALE GENOMIC DNA]</scope>
    <source>
        <strain>ATCC 700392 / 26695</strain>
    </source>
</reference>
<sequence>MKVYIETMGCAMNSRDSEHLLSELSKLDYKETNDPKTADLILINTCSVREKPERKLFSEIGQFAKIKKPNAKIGVCGCTASHMGADILKKAPSVSFVLGARNVSKISQVIHKEKAVEVAIDYDESAYAFEFFEKKAQIRSLLNISIGCDKKCAYCIVPHTRGKEISIPMDLILKEAEKLANNGTKELMLLGQNVNNYGARFSSEHAKVDFSDLLDKLSEIQGIERIRFTSPHPLHMNDGFLERFAKNPKVCKSIHMPLQSGSSAVLKMMRRGYSKEWFLNRVERLKALVPEVGISTDIIVGFPNESDKDFEDTMEVLEKVRFDTLYSFIYSPRPFTEAGAWKERVPLEVSSSRLERLQNRHKEILEEKAKLEVGKTHVVLVENRREMDNQIVGFEGRSDTGKFIEVTCKEKRNPGELVKVEIISHSKGRLMAATKGN</sequence>